<accession>Q7Z2Y8</accession>
<accession>A6NFL2</accession>
<accession>Q9H8N5</accession>
<protein>
    <recommendedName>
        <fullName>Interferon-induced very large GTPase 1</fullName>
    </recommendedName>
    <alternativeName>
        <fullName>Interferon-induced very large GTPase pseudogene 1</fullName>
    </alternativeName>
</protein>
<name>GVIN1_HUMAN</name>
<gene>
    <name type="primary">GVINP1</name>
    <name type="synonym">GVIN1</name>
    <name type="synonym">VLIG1</name>
</gene>
<organism>
    <name type="scientific">Homo sapiens</name>
    <name type="common">Human</name>
    <dbReference type="NCBI Taxonomy" id="9606"/>
    <lineage>
        <taxon>Eukaryota</taxon>
        <taxon>Metazoa</taxon>
        <taxon>Chordata</taxon>
        <taxon>Craniata</taxon>
        <taxon>Vertebrata</taxon>
        <taxon>Euteleostomi</taxon>
        <taxon>Mammalia</taxon>
        <taxon>Eutheria</taxon>
        <taxon>Euarchontoglires</taxon>
        <taxon>Primates</taxon>
        <taxon>Haplorrhini</taxon>
        <taxon>Catarrhini</taxon>
        <taxon>Hominidae</taxon>
        <taxon>Homo</taxon>
    </lineage>
</organism>
<dbReference type="EMBL" id="AC091564">
    <property type="status" value="NOT_ANNOTATED_CDS"/>
    <property type="molecule type" value="Genomic_DNA"/>
</dbReference>
<dbReference type="EMBL" id="BX538342">
    <property type="protein sequence ID" value="CAD98105.1"/>
    <property type="molecule type" value="mRNA"/>
</dbReference>
<dbReference type="EMBL" id="AK023435">
    <property type="protein sequence ID" value="BAB14573.1"/>
    <property type="status" value="ALT_INIT"/>
    <property type="molecule type" value="mRNA"/>
</dbReference>
<dbReference type="FunCoup" id="Q7Z2Y8">
    <property type="interactions" value="9"/>
</dbReference>
<dbReference type="IntAct" id="Q7Z2Y8">
    <property type="interactions" value="2"/>
</dbReference>
<dbReference type="CarbonylDB" id="Q7Z2Y8"/>
<dbReference type="GlyGen" id="Q7Z2Y8">
    <property type="glycosylation" value="3 sites, 1 O-linked glycan (3 sites)"/>
</dbReference>
<dbReference type="iPTMnet" id="Q7Z2Y8"/>
<dbReference type="PhosphoSitePlus" id="Q7Z2Y8"/>
<dbReference type="BioMuta" id="HGNC:25813"/>
<dbReference type="DMDM" id="172045914"/>
<dbReference type="jPOST" id="Q7Z2Y8"/>
<dbReference type="MassIVE" id="Q7Z2Y8"/>
<dbReference type="ProteomicsDB" id="68988"/>
<dbReference type="AGR" id="HGNC:25813"/>
<dbReference type="GeneCards" id="GVINP1"/>
<dbReference type="HGNC" id="HGNC:25813">
    <property type="gene designation" value="GVINP1"/>
</dbReference>
<dbReference type="MIM" id="616121">
    <property type="type" value="gene"/>
</dbReference>
<dbReference type="neXtProt" id="NX_Q7Z2Y8"/>
<dbReference type="InParanoid" id="Q7Z2Y8"/>
<dbReference type="PAN-GO" id="Q7Z2Y8">
    <property type="GO annotations" value="0 GO annotations based on evolutionary models"/>
</dbReference>
<dbReference type="PhylomeDB" id="Q7Z2Y8"/>
<dbReference type="PathwayCommons" id="Q7Z2Y8"/>
<dbReference type="ChiTaRS" id="GVINP1">
    <property type="organism name" value="human"/>
</dbReference>
<dbReference type="Pharos" id="Q7Z2Y8">
    <property type="development level" value="Tdark"/>
</dbReference>
<dbReference type="PRO" id="PR:Q7Z2Y8"/>
<dbReference type="Proteomes" id="UP000005640">
    <property type="component" value="Unplaced"/>
</dbReference>
<dbReference type="RNAct" id="Q7Z2Y8">
    <property type="molecule type" value="protein"/>
</dbReference>
<dbReference type="GO" id="GO:0005829">
    <property type="term" value="C:cytosol"/>
    <property type="evidence" value="ECO:0007669"/>
    <property type="project" value="UniProtKB-SubCell"/>
</dbReference>
<dbReference type="GO" id="GO:0005634">
    <property type="term" value="C:nucleus"/>
    <property type="evidence" value="ECO:0007669"/>
    <property type="project" value="UniProtKB-SubCell"/>
</dbReference>
<dbReference type="GO" id="GO:0005525">
    <property type="term" value="F:GTP binding"/>
    <property type="evidence" value="ECO:0007669"/>
    <property type="project" value="UniProtKB-KW"/>
</dbReference>
<dbReference type="Gene3D" id="3.40.50.300">
    <property type="entry name" value="P-loop containing nucleotide triphosphate hydrolases"/>
    <property type="match status" value="1"/>
</dbReference>
<dbReference type="InterPro" id="IPR029028">
    <property type="entry name" value="Alpha/beta_knot_MTases"/>
</dbReference>
<dbReference type="InterPro" id="IPR030383">
    <property type="entry name" value="G_VLIG_dom"/>
</dbReference>
<dbReference type="InterPro" id="IPR027417">
    <property type="entry name" value="P-loop_NTPase"/>
</dbReference>
<dbReference type="PANTHER" id="PTHR22796:SF6">
    <property type="entry name" value="INTERFERON-INDUCED VERY LARGE GTPASE 1-RELATED"/>
    <property type="match status" value="1"/>
</dbReference>
<dbReference type="PANTHER" id="PTHR22796">
    <property type="entry name" value="URG4-RELATED"/>
    <property type="match status" value="1"/>
</dbReference>
<dbReference type="Pfam" id="PF25496">
    <property type="entry name" value="URGCP"/>
    <property type="match status" value="1"/>
</dbReference>
<dbReference type="SUPFAM" id="SSF75217">
    <property type="entry name" value="alpha/beta knot"/>
    <property type="match status" value="1"/>
</dbReference>
<dbReference type="SUPFAM" id="SSF52540">
    <property type="entry name" value="P-loop containing nucleoside triphosphate hydrolases"/>
    <property type="match status" value="1"/>
</dbReference>
<dbReference type="PROSITE" id="PS51717">
    <property type="entry name" value="G_VLIG"/>
    <property type="match status" value="1"/>
</dbReference>
<sequence length="2422" mass="279048">MATGEHTPDDPLLRGKRRQDLQEMLREVGLDVEYWLPKLQEHLGVTCAQALQHLDKNNLKKLKSQTQHPWEKLLNLSHSKSLSALLQESQVERAKRKQKQAEQALQELRDLLTEGKQRQEEAVRTREAELRQAMDIPEEYWPSPEEPLRELMENLQRQLNLMKWTLCHRQNLPDRDVVRWASGGLALQGIYKASHQRGLTEKREELLSVPKEFLLLGPQQGTQMKTKEFTSPQAEFMFTQMVEKLGFRLTTSAKDGNWGFSLEAGLDHSKHPESKETQQSSSENSYFCSTKFSYIPLASCHFPIDQLQLSKPAVQELKCIEELLSQTTNPDRFSLLRHRIINFFHRFGSHVNQGPLHLGGIYWWKAISEGYCTEQLAEVRQQSAEALDIFIRDSYSGFGVKVAAGVNVSDSHSKTATQTKTSQNLQTKVQLSVAQTGGPPEADGLVQWKAGLIASNQTWCVIDRGLQLVPVWDIILSSHRSNFKDPLQVANFLKDSYTALTSITAQIQNGEELLSAGKEARVFLEDVKSWEVSDPEEQLKKLINFMKMLSQKLKSYDTWINICLTDSLQNFLVNTINFCKKSSIYKTKCIKSHLRSLLDPHIYRVTNFPQAHFIMQWIFQSDSEQEQVNISQFSQLIEILKETQNNLMEVKVKSESPETVEEAQRKSTYEVSLALSCFLNYLQKTEQTDTQLLLLSIAAAAGYHVINNTFQSLLGCDELSFLLDEMQTAQNKYQELKNICSYRAQAFLVLTGLTATVGDTAISSEEKTQRMSLMRHHMGQSLSKEVAHVLTKPGADHDWENLEKDLRLLINGDYEEVTISSLQMEEVSKQSLFYGKKQPHEPHDNENNKWEMIKNGAFLDLLQHLGLEHYYPKKLSKANFHLIYKTSVYNTQPSSEQELPFYFLQKLLMMDYELRYLVFKDDRNTEHQVHPNASDQEDEAFDPYENFFEDSDSPTKSSSTEPSPHIHPVDIQMTIFHCADNFARQYILAKLSTCQFALPLLVPNPCTSQIEFSLWSLRQITRSWQEARKSPKGKNYYKNQQMCCVSTSIVSFVRVGNGLSASKSQIMNCLLSKRKHDVFFHRHCTGSRKDCLLMGGMVEICWFCPGGEDEDRFDNCVTFTNLHGDAKEHEQQLSFLKEVSTVIVVLMSASDDNEGNRKIVRNLWQSSRPLICLLDDKEATMTNISGQRMRMGIKNRNEAELTEELTTTIRHLLELSDTALSLEDCSQIAHQQGFLIDEDQRDCKEAKEKAQALMAFLGKMKLSQIKEKLLPLQGQLWHHWCKKDKELYHLREKGNQSIEQHKSEIETDKQIIRHEQLARALPLNDLMQSVLQFLQEHSEIHTKLYFLQWLSVFLDKLTAGHLEELHEKQKYWWSLVQTVKQKAPNSHSLICLQSEIEAISTEISDCTLGIEQLIREVGQIYEALEEASSIKKIFFSLPQIAADLMISGVPIELMDGDAAYVPLTWVAAVFDKVSEKLGDKRLFVLSILGLQSSGKSTVLNALFGLQFTVSAGKCTQGAYMQLLKVEETFTEELGFDFVLAVDTEGLRAPEHSNKSKDRDNELVTFVIGLANLTLINIFGENPSEMQDILQIVVQAFLRMKQVKIFPSCLFVHQNVGEATATDQTMDGRRRLEQKLDEMAAIAAEQEQCLDVTCFSDVIRFDVNTHVYYFAHLWDGNPPMAPPNPRYSHNVQQLKSRILMTATQESRGNIMKISDVKSRVQDLWRGLMNENFIFSFRNTQEVMAMNKLETMYNHWTWELRSHVLGLQNQLINQIQNGKIQTLEASTFEVLVTEKYEVVKQELEKYFNEGPCSKILIQCKANFENKLIVLKEKLISDSKRQANELISFKNQSQERLNKKKTDYEKELLEKSRKLALTVKGKELSEEELHEKFNQLWKKWVCDVSTTLPQVTEPDIDLDSENILWEYFKNKTNVVGLLTNSAEKFQINYDKHIKVNKKYNHIPMTLTVFEKEFINMTTDYIVSRFNKIINNMWKQQCGYNPNYFHEILKTIEEEVKSASTQKRYTFTNTFIIDLCVCLFQRARENFKEMHRAFKRANDPVNYLESKKDDFFTSFKISCQGATSIKTFVDVLWYKLTPAVSTTIWEDMTFKIAGDMRATCPAFNGNRTNLEKHILFSLAEEENFDNYWEYLHNSKSFFRSYIKNHIKRYCSDNGGEKMKTFFEKSLIDIKNTILSAIHESTSVAKDKSSTASEWLDLFCDCLGCNLIFPRRDLISIEHQEIKHTEFLKEAMSAALDLTMKKIEQNYSSKPIEAMVSKIEKMLSEHLCGCWKQCPSCGAICTNTIPTHEGDHSVPFHRPQAVNGEEWYETDDFVIDCCTSLVASDCLLVLRDGRNFPFKNYRQAGGDYAMWSITPDTSIQLYWKWFVSHFRSNLEEKYQKKFAGKGKIPNAWAKITKQDVLEDLKKQ</sequence>
<comment type="subcellular location">
    <subcellularLocation>
        <location evidence="1">Cytoplasm</location>
        <location evidence="1">Cytosol</location>
    </subcellularLocation>
    <subcellularLocation>
        <location evidence="1">Nucleus</location>
    </subcellularLocation>
</comment>
<comment type="similarity">
    <text evidence="5">Belongs to the TRAFAC class dynamin-like GTPase superfamily. Very large inducible GTPase (VLIG) family.</text>
</comment>
<comment type="sequence caution" evidence="5">
    <conflict type="erroneous initiation">
        <sequence resource="EMBL-CDS" id="BAB14573"/>
    </conflict>
    <text>Truncated N-terminus.</text>
</comment>
<reference key="1">
    <citation type="journal article" date="2006" name="Nature">
        <title>Human chromosome 11 DNA sequence and analysis including novel gene identification.</title>
        <authorList>
            <person name="Taylor T.D."/>
            <person name="Noguchi H."/>
            <person name="Totoki Y."/>
            <person name="Toyoda A."/>
            <person name="Kuroki Y."/>
            <person name="Dewar K."/>
            <person name="Lloyd C."/>
            <person name="Itoh T."/>
            <person name="Takeda T."/>
            <person name="Kim D.-W."/>
            <person name="She X."/>
            <person name="Barlow K.F."/>
            <person name="Bloom T."/>
            <person name="Bruford E."/>
            <person name="Chang J.L."/>
            <person name="Cuomo C.A."/>
            <person name="Eichler E."/>
            <person name="FitzGerald M.G."/>
            <person name="Jaffe D.B."/>
            <person name="LaButti K."/>
            <person name="Nicol R."/>
            <person name="Park H.-S."/>
            <person name="Seaman C."/>
            <person name="Sougnez C."/>
            <person name="Yang X."/>
            <person name="Zimmer A.R."/>
            <person name="Zody M.C."/>
            <person name="Birren B.W."/>
            <person name="Nusbaum C."/>
            <person name="Fujiyama A."/>
            <person name="Hattori M."/>
            <person name="Rogers J."/>
            <person name="Lander E.S."/>
            <person name="Sakaki Y."/>
        </authorList>
    </citation>
    <scope>NUCLEOTIDE SEQUENCE [LARGE SCALE GENOMIC DNA]</scope>
</reference>
<reference key="2">
    <citation type="journal article" date="2007" name="BMC Genomics">
        <title>The full-ORF clone resource of the German cDNA consortium.</title>
        <authorList>
            <person name="Bechtel S."/>
            <person name="Rosenfelder H."/>
            <person name="Duda A."/>
            <person name="Schmidt C.P."/>
            <person name="Ernst U."/>
            <person name="Wellenreuther R."/>
            <person name="Mehrle A."/>
            <person name="Schuster C."/>
            <person name="Bahr A."/>
            <person name="Bloecker H."/>
            <person name="Heubner D."/>
            <person name="Hoerlein A."/>
            <person name="Michel G."/>
            <person name="Wedler H."/>
            <person name="Koehrer K."/>
            <person name="Ottenwaelder B."/>
            <person name="Poustka A."/>
            <person name="Wiemann S."/>
            <person name="Schupp I."/>
        </authorList>
    </citation>
    <scope>NUCLEOTIDE SEQUENCE [LARGE SCALE MRNA] OF 1301-2422</scope>
    <source>
        <tissue>Small intestine</tissue>
    </source>
</reference>
<reference key="3">
    <citation type="journal article" date="2004" name="Nat. Genet.">
        <title>Complete sequencing and characterization of 21,243 full-length human cDNAs.</title>
        <authorList>
            <person name="Ota T."/>
            <person name="Suzuki Y."/>
            <person name="Nishikawa T."/>
            <person name="Otsuki T."/>
            <person name="Sugiyama T."/>
            <person name="Irie R."/>
            <person name="Wakamatsu A."/>
            <person name="Hayashi K."/>
            <person name="Sato H."/>
            <person name="Nagai K."/>
            <person name="Kimura K."/>
            <person name="Makita H."/>
            <person name="Sekine M."/>
            <person name="Obayashi M."/>
            <person name="Nishi T."/>
            <person name="Shibahara T."/>
            <person name="Tanaka T."/>
            <person name="Ishii S."/>
            <person name="Yamamoto J."/>
            <person name="Saito K."/>
            <person name="Kawai Y."/>
            <person name="Isono Y."/>
            <person name="Nakamura Y."/>
            <person name="Nagahari K."/>
            <person name="Murakami K."/>
            <person name="Yasuda T."/>
            <person name="Iwayanagi T."/>
            <person name="Wagatsuma M."/>
            <person name="Shiratori A."/>
            <person name="Sudo H."/>
            <person name="Hosoiri T."/>
            <person name="Kaku Y."/>
            <person name="Kodaira H."/>
            <person name="Kondo H."/>
            <person name="Sugawara M."/>
            <person name="Takahashi M."/>
            <person name="Kanda K."/>
            <person name="Yokoi T."/>
            <person name="Furuya T."/>
            <person name="Kikkawa E."/>
            <person name="Omura Y."/>
            <person name="Abe K."/>
            <person name="Kamihara K."/>
            <person name="Katsuta N."/>
            <person name="Sato K."/>
            <person name="Tanikawa M."/>
            <person name="Yamazaki M."/>
            <person name="Ninomiya K."/>
            <person name="Ishibashi T."/>
            <person name="Yamashita H."/>
            <person name="Murakawa K."/>
            <person name="Fujimori K."/>
            <person name="Tanai H."/>
            <person name="Kimata M."/>
            <person name="Watanabe M."/>
            <person name="Hiraoka S."/>
            <person name="Chiba Y."/>
            <person name="Ishida S."/>
            <person name="Ono Y."/>
            <person name="Takiguchi S."/>
            <person name="Watanabe S."/>
            <person name="Yosida M."/>
            <person name="Hotuta T."/>
            <person name="Kusano J."/>
            <person name="Kanehori K."/>
            <person name="Takahashi-Fujii A."/>
            <person name="Hara H."/>
            <person name="Tanase T.-O."/>
            <person name="Nomura Y."/>
            <person name="Togiya S."/>
            <person name="Komai F."/>
            <person name="Hara R."/>
            <person name="Takeuchi K."/>
            <person name="Arita M."/>
            <person name="Imose N."/>
            <person name="Musashino K."/>
            <person name="Yuuki H."/>
            <person name="Oshima A."/>
            <person name="Sasaki N."/>
            <person name="Aotsuka S."/>
            <person name="Yoshikawa Y."/>
            <person name="Matsunawa H."/>
            <person name="Ichihara T."/>
            <person name="Shiohata N."/>
            <person name="Sano S."/>
            <person name="Moriya S."/>
            <person name="Momiyama H."/>
            <person name="Satoh N."/>
            <person name="Takami S."/>
            <person name="Terashima Y."/>
            <person name="Suzuki O."/>
            <person name="Nakagawa S."/>
            <person name="Senoh A."/>
            <person name="Mizoguchi H."/>
            <person name="Goto Y."/>
            <person name="Shimizu F."/>
            <person name="Wakebe H."/>
            <person name="Hishigaki H."/>
            <person name="Watanabe T."/>
            <person name="Sugiyama A."/>
            <person name="Takemoto M."/>
            <person name="Kawakami B."/>
            <person name="Yamazaki M."/>
            <person name="Watanabe K."/>
            <person name="Kumagai A."/>
            <person name="Itakura S."/>
            <person name="Fukuzumi Y."/>
            <person name="Fujimori Y."/>
            <person name="Komiyama M."/>
            <person name="Tashiro H."/>
            <person name="Tanigami A."/>
            <person name="Fujiwara T."/>
            <person name="Ono T."/>
            <person name="Yamada K."/>
            <person name="Fujii Y."/>
            <person name="Ozaki K."/>
            <person name="Hirao M."/>
            <person name="Ohmori Y."/>
            <person name="Kawabata A."/>
            <person name="Hikiji T."/>
            <person name="Kobatake N."/>
            <person name="Inagaki H."/>
            <person name="Ikema Y."/>
            <person name="Okamoto S."/>
            <person name="Okitani R."/>
            <person name="Kawakami T."/>
            <person name="Noguchi S."/>
            <person name="Itoh T."/>
            <person name="Shigeta K."/>
            <person name="Senba T."/>
            <person name="Matsumura K."/>
            <person name="Nakajima Y."/>
            <person name="Mizuno T."/>
            <person name="Morinaga M."/>
            <person name="Sasaki M."/>
            <person name="Togashi T."/>
            <person name="Oyama M."/>
            <person name="Hata H."/>
            <person name="Watanabe M."/>
            <person name="Komatsu T."/>
            <person name="Mizushima-Sugano J."/>
            <person name="Satoh T."/>
            <person name="Shirai Y."/>
            <person name="Takahashi Y."/>
            <person name="Nakagawa K."/>
            <person name="Okumura K."/>
            <person name="Nagase T."/>
            <person name="Nomura N."/>
            <person name="Kikuchi H."/>
            <person name="Masuho Y."/>
            <person name="Yamashita R."/>
            <person name="Nakai K."/>
            <person name="Yada T."/>
            <person name="Nakamura Y."/>
            <person name="Ohara O."/>
            <person name="Isogai T."/>
            <person name="Sugano S."/>
        </authorList>
    </citation>
    <scope>NUCLEOTIDE SEQUENCE [LARGE SCALE MRNA] OF 1806-2422</scope>
    <source>
        <tissue>Placenta</tissue>
    </source>
</reference>
<evidence type="ECO:0000250" key="1"/>
<evidence type="ECO:0000255" key="2"/>
<evidence type="ECO:0000255" key="3">
    <source>
        <dbReference type="PROSITE-ProRule" id="PRU01054"/>
    </source>
</evidence>
<evidence type="ECO:0000256" key="4">
    <source>
        <dbReference type="SAM" id="MobiDB-lite"/>
    </source>
</evidence>
<evidence type="ECO:0000305" key="5"/>
<proteinExistence type="evidence at protein level"/>
<keyword id="KW-0963">Cytoplasm</keyword>
<keyword id="KW-0342">GTP-binding</keyword>
<keyword id="KW-0547">Nucleotide-binding</keyword>
<keyword id="KW-0539">Nucleus</keyword>
<keyword id="KW-1267">Proteomics identification</keyword>
<keyword id="KW-1185">Reference proteome</keyword>
<feature type="chain" id="PRO_0000324578" description="Interferon-induced very large GTPase 1">
    <location>
        <begin position="1"/>
        <end position="2422"/>
    </location>
</feature>
<feature type="domain" description="VLIG-type G" evidence="3">
    <location>
        <begin position="1479"/>
        <end position="1720"/>
    </location>
</feature>
<feature type="region of interest" description="Disordered" evidence="4">
    <location>
        <begin position="945"/>
        <end position="965"/>
    </location>
</feature>
<feature type="compositionally biased region" description="Low complexity" evidence="4">
    <location>
        <begin position="954"/>
        <end position="963"/>
    </location>
</feature>
<feature type="binding site" evidence="2">
    <location>
        <begin position="1489"/>
        <end position="1496"/>
    </location>
    <ligand>
        <name>GTP</name>
        <dbReference type="ChEBI" id="CHEBI:37565"/>
    </ligand>
</feature>
<feature type="binding site" evidence="2">
    <location>
        <begin position="1542"/>
        <end position="1545"/>
    </location>
    <ligand>
        <name>GTP</name>
        <dbReference type="ChEBI" id="CHEBI:37565"/>
    </ligand>
</feature>
<feature type="binding site" evidence="2">
    <location>
        <begin position="1619"/>
        <end position="1622"/>
    </location>
    <ligand>
        <name>GTP</name>
        <dbReference type="ChEBI" id="CHEBI:37565"/>
    </ligand>
</feature>
<feature type="sequence conflict" description="In Ref. 3; BAB14573." evidence="5" ref="3">
    <original>V</original>
    <variation>I</variation>
    <location>
        <position position="2087"/>
    </location>
</feature>